<feature type="chain" id="PRO_0000176388" description="Asparagine--tRNA ligase">
    <location>
        <begin position="1"/>
        <end position="463"/>
    </location>
</feature>
<dbReference type="EC" id="6.1.1.22" evidence="1"/>
<dbReference type="EMBL" id="CP000001">
    <property type="protein sequence ID" value="AAU15968.1"/>
    <property type="molecule type" value="Genomic_DNA"/>
</dbReference>
<dbReference type="RefSeq" id="WP_000432163.1">
    <property type="nucleotide sequence ID" value="NZ_CP009968.1"/>
</dbReference>
<dbReference type="SMR" id="Q633N6"/>
<dbReference type="GeneID" id="45024431"/>
<dbReference type="KEGG" id="bcz:BCE33L4302"/>
<dbReference type="PATRIC" id="fig|288681.22.peg.1072"/>
<dbReference type="Proteomes" id="UP000002612">
    <property type="component" value="Chromosome"/>
</dbReference>
<dbReference type="GO" id="GO:0005737">
    <property type="term" value="C:cytoplasm"/>
    <property type="evidence" value="ECO:0007669"/>
    <property type="project" value="UniProtKB-SubCell"/>
</dbReference>
<dbReference type="GO" id="GO:0004816">
    <property type="term" value="F:asparagine-tRNA ligase activity"/>
    <property type="evidence" value="ECO:0007669"/>
    <property type="project" value="UniProtKB-UniRule"/>
</dbReference>
<dbReference type="GO" id="GO:0005524">
    <property type="term" value="F:ATP binding"/>
    <property type="evidence" value="ECO:0007669"/>
    <property type="project" value="UniProtKB-UniRule"/>
</dbReference>
<dbReference type="GO" id="GO:0140096">
    <property type="term" value="F:catalytic activity, acting on a protein"/>
    <property type="evidence" value="ECO:0007669"/>
    <property type="project" value="UniProtKB-ARBA"/>
</dbReference>
<dbReference type="GO" id="GO:0003676">
    <property type="term" value="F:nucleic acid binding"/>
    <property type="evidence" value="ECO:0007669"/>
    <property type="project" value="InterPro"/>
</dbReference>
<dbReference type="GO" id="GO:0016740">
    <property type="term" value="F:transferase activity"/>
    <property type="evidence" value="ECO:0007669"/>
    <property type="project" value="UniProtKB-ARBA"/>
</dbReference>
<dbReference type="GO" id="GO:0006421">
    <property type="term" value="P:asparaginyl-tRNA aminoacylation"/>
    <property type="evidence" value="ECO:0007669"/>
    <property type="project" value="UniProtKB-UniRule"/>
</dbReference>
<dbReference type="CDD" id="cd00776">
    <property type="entry name" value="AsxRS_core"/>
    <property type="match status" value="1"/>
</dbReference>
<dbReference type="CDD" id="cd04318">
    <property type="entry name" value="EcAsnRS_like_N"/>
    <property type="match status" value="1"/>
</dbReference>
<dbReference type="FunFam" id="3.30.930.10:FF:000016">
    <property type="entry name" value="Asparagine--tRNA ligase"/>
    <property type="match status" value="1"/>
</dbReference>
<dbReference type="Gene3D" id="3.30.930.10">
    <property type="entry name" value="Bira Bifunctional Protein, Domain 2"/>
    <property type="match status" value="1"/>
</dbReference>
<dbReference type="Gene3D" id="2.40.50.140">
    <property type="entry name" value="Nucleic acid-binding proteins"/>
    <property type="match status" value="1"/>
</dbReference>
<dbReference type="HAMAP" id="MF_00534">
    <property type="entry name" value="Asn_tRNA_synth"/>
    <property type="match status" value="1"/>
</dbReference>
<dbReference type="InterPro" id="IPR004364">
    <property type="entry name" value="Aa-tRNA-synt_II"/>
</dbReference>
<dbReference type="InterPro" id="IPR006195">
    <property type="entry name" value="aa-tRNA-synth_II"/>
</dbReference>
<dbReference type="InterPro" id="IPR045864">
    <property type="entry name" value="aa-tRNA-synth_II/BPL/LPL"/>
</dbReference>
<dbReference type="InterPro" id="IPR004522">
    <property type="entry name" value="Asn-tRNA-ligase"/>
</dbReference>
<dbReference type="InterPro" id="IPR002312">
    <property type="entry name" value="Asp/Asn-tRNA-synth_IIb"/>
</dbReference>
<dbReference type="InterPro" id="IPR012340">
    <property type="entry name" value="NA-bd_OB-fold"/>
</dbReference>
<dbReference type="InterPro" id="IPR004365">
    <property type="entry name" value="NA-bd_OB_tRNA"/>
</dbReference>
<dbReference type="NCBIfam" id="TIGR00457">
    <property type="entry name" value="asnS"/>
    <property type="match status" value="1"/>
</dbReference>
<dbReference type="NCBIfam" id="NF003037">
    <property type="entry name" value="PRK03932.1"/>
    <property type="match status" value="1"/>
</dbReference>
<dbReference type="PANTHER" id="PTHR22594:SF34">
    <property type="entry name" value="ASPARAGINE--TRNA LIGASE, MITOCHONDRIAL-RELATED"/>
    <property type="match status" value="1"/>
</dbReference>
<dbReference type="PANTHER" id="PTHR22594">
    <property type="entry name" value="ASPARTYL/LYSYL-TRNA SYNTHETASE"/>
    <property type="match status" value="1"/>
</dbReference>
<dbReference type="Pfam" id="PF00152">
    <property type="entry name" value="tRNA-synt_2"/>
    <property type="match status" value="1"/>
</dbReference>
<dbReference type="Pfam" id="PF01336">
    <property type="entry name" value="tRNA_anti-codon"/>
    <property type="match status" value="1"/>
</dbReference>
<dbReference type="PRINTS" id="PR01042">
    <property type="entry name" value="TRNASYNTHASP"/>
</dbReference>
<dbReference type="SUPFAM" id="SSF55681">
    <property type="entry name" value="Class II aaRS and biotin synthetases"/>
    <property type="match status" value="1"/>
</dbReference>
<dbReference type="SUPFAM" id="SSF50249">
    <property type="entry name" value="Nucleic acid-binding proteins"/>
    <property type="match status" value="1"/>
</dbReference>
<dbReference type="PROSITE" id="PS50862">
    <property type="entry name" value="AA_TRNA_LIGASE_II"/>
    <property type="match status" value="1"/>
</dbReference>
<keyword id="KW-0030">Aminoacyl-tRNA synthetase</keyword>
<keyword id="KW-0067">ATP-binding</keyword>
<keyword id="KW-0963">Cytoplasm</keyword>
<keyword id="KW-0436">Ligase</keyword>
<keyword id="KW-0547">Nucleotide-binding</keyword>
<keyword id="KW-0648">Protein biosynthesis</keyword>
<evidence type="ECO:0000255" key="1">
    <source>
        <dbReference type="HAMAP-Rule" id="MF_00534"/>
    </source>
</evidence>
<organism>
    <name type="scientific">Bacillus cereus (strain ZK / E33L)</name>
    <dbReference type="NCBI Taxonomy" id="288681"/>
    <lineage>
        <taxon>Bacteria</taxon>
        <taxon>Bacillati</taxon>
        <taxon>Bacillota</taxon>
        <taxon>Bacilli</taxon>
        <taxon>Bacillales</taxon>
        <taxon>Bacillaceae</taxon>
        <taxon>Bacillus</taxon>
        <taxon>Bacillus cereus group</taxon>
    </lineage>
</organism>
<name>SYN_BACCZ</name>
<protein>
    <recommendedName>
        <fullName evidence="1">Asparagine--tRNA ligase</fullName>
        <ecNumber evidence="1">6.1.1.22</ecNumber>
    </recommendedName>
    <alternativeName>
        <fullName evidence="1">Asparaginyl-tRNA synthetase</fullName>
        <shortName evidence="1">AsnRS</shortName>
    </alternativeName>
</protein>
<sequence length="463" mass="52926">MENTLVKSLYRDTDKYAGQTVQVSGWIRNLRDSKAFGFIELNDGSFFKSVQIVFDTELDNFKEIAKLPLSSSVKVEGKVIATPGAKQPFEIKAEKIDIEGLSDSDYPLQKKRHTFEYLRTIAHLRPRTNAFSATFRVRSIAAFAIHQFFQERGFVHVHTPIITGSDTEGAGEMFRVTTQDLNNVPKGEDGQVDESKDFFGKETNLTVSGQLNAEAYALAFRDVYTFGPTFRAENSNTTRHAAEFWMVEPEIAFAELGDVMNLTEDMLKYAMKYVLEHAPEEMEFFNSFVDKTVLERMNNVINSDFGRITYTEAIKVLQESGADFKYPVEWGIDLQTEHERYLSEEIFKRPVFVTDYPKDIKAFYMRLNDDGKTVAATDLLVPGIGELIGGSQREERMDVLVDRIKELGMNEEDYWWYLELRKYGGTKHAGFGLGFERFLMYITGMANIRDVIPFPRTPGSSEF</sequence>
<accession>Q633N6</accession>
<reference key="1">
    <citation type="journal article" date="2006" name="J. Bacteriol.">
        <title>Pathogenomic sequence analysis of Bacillus cereus and Bacillus thuringiensis isolates closely related to Bacillus anthracis.</title>
        <authorList>
            <person name="Han C.S."/>
            <person name="Xie G."/>
            <person name="Challacombe J.F."/>
            <person name="Altherr M.R."/>
            <person name="Bhotika S.S."/>
            <person name="Bruce D."/>
            <person name="Campbell C.S."/>
            <person name="Campbell M.L."/>
            <person name="Chen J."/>
            <person name="Chertkov O."/>
            <person name="Cleland C."/>
            <person name="Dimitrijevic M."/>
            <person name="Doggett N.A."/>
            <person name="Fawcett J.J."/>
            <person name="Glavina T."/>
            <person name="Goodwin L.A."/>
            <person name="Hill K.K."/>
            <person name="Hitchcock P."/>
            <person name="Jackson P.J."/>
            <person name="Keim P."/>
            <person name="Kewalramani A.R."/>
            <person name="Longmire J."/>
            <person name="Lucas S."/>
            <person name="Malfatti S."/>
            <person name="McMurry K."/>
            <person name="Meincke L.J."/>
            <person name="Misra M."/>
            <person name="Moseman B.L."/>
            <person name="Mundt M."/>
            <person name="Munk A.C."/>
            <person name="Okinaka R.T."/>
            <person name="Parson-Quintana B."/>
            <person name="Reilly L.P."/>
            <person name="Richardson P."/>
            <person name="Robinson D.L."/>
            <person name="Rubin E."/>
            <person name="Saunders E."/>
            <person name="Tapia R."/>
            <person name="Tesmer J.G."/>
            <person name="Thayer N."/>
            <person name="Thompson L.S."/>
            <person name="Tice H."/>
            <person name="Ticknor L.O."/>
            <person name="Wills P.L."/>
            <person name="Brettin T.S."/>
            <person name="Gilna P."/>
        </authorList>
    </citation>
    <scope>NUCLEOTIDE SEQUENCE [LARGE SCALE GENOMIC DNA]</scope>
    <source>
        <strain>ZK / E33L</strain>
    </source>
</reference>
<proteinExistence type="inferred from homology"/>
<comment type="catalytic activity">
    <reaction evidence="1">
        <text>tRNA(Asn) + L-asparagine + ATP = L-asparaginyl-tRNA(Asn) + AMP + diphosphate + H(+)</text>
        <dbReference type="Rhea" id="RHEA:11180"/>
        <dbReference type="Rhea" id="RHEA-COMP:9659"/>
        <dbReference type="Rhea" id="RHEA-COMP:9674"/>
        <dbReference type="ChEBI" id="CHEBI:15378"/>
        <dbReference type="ChEBI" id="CHEBI:30616"/>
        <dbReference type="ChEBI" id="CHEBI:33019"/>
        <dbReference type="ChEBI" id="CHEBI:58048"/>
        <dbReference type="ChEBI" id="CHEBI:78442"/>
        <dbReference type="ChEBI" id="CHEBI:78515"/>
        <dbReference type="ChEBI" id="CHEBI:456215"/>
        <dbReference type="EC" id="6.1.1.22"/>
    </reaction>
</comment>
<comment type="subunit">
    <text evidence="1">Homodimer.</text>
</comment>
<comment type="subcellular location">
    <subcellularLocation>
        <location evidence="1">Cytoplasm</location>
    </subcellularLocation>
</comment>
<comment type="similarity">
    <text evidence="1">Belongs to the class-II aminoacyl-tRNA synthetase family.</text>
</comment>
<gene>
    <name evidence="1" type="primary">asnS</name>
    <name type="ordered locus">BCE33L4302</name>
</gene>